<gene>
    <name evidence="1" type="primary">rpl10e</name>
    <name type="ordered locus">MA_0183</name>
</gene>
<comment type="similarity">
    <text evidence="1">Belongs to the universal ribosomal protein uL16 family.</text>
</comment>
<proteinExistence type="inferred from homology"/>
<name>RL10E_METAC</name>
<reference key="1">
    <citation type="journal article" date="2002" name="Genome Res.">
        <title>The genome of Methanosarcina acetivorans reveals extensive metabolic and physiological diversity.</title>
        <authorList>
            <person name="Galagan J.E."/>
            <person name="Nusbaum C."/>
            <person name="Roy A."/>
            <person name="Endrizzi M.G."/>
            <person name="Macdonald P."/>
            <person name="FitzHugh W."/>
            <person name="Calvo S."/>
            <person name="Engels R."/>
            <person name="Smirnov S."/>
            <person name="Atnoor D."/>
            <person name="Brown A."/>
            <person name="Allen N."/>
            <person name="Naylor J."/>
            <person name="Stange-Thomann N."/>
            <person name="DeArellano K."/>
            <person name="Johnson R."/>
            <person name="Linton L."/>
            <person name="McEwan P."/>
            <person name="McKernan K."/>
            <person name="Talamas J."/>
            <person name="Tirrell A."/>
            <person name="Ye W."/>
            <person name="Zimmer A."/>
            <person name="Barber R.D."/>
            <person name="Cann I."/>
            <person name="Graham D.E."/>
            <person name="Grahame D.A."/>
            <person name="Guss A.M."/>
            <person name="Hedderich R."/>
            <person name="Ingram-Smith C."/>
            <person name="Kuettner H.C."/>
            <person name="Krzycki J.A."/>
            <person name="Leigh J.A."/>
            <person name="Li W."/>
            <person name="Liu J."/>
            <person name="Mukhopadhyay B."/>
            <person name="Reeve J.N."/>
            <person name="Smith K."/>
            <person name="Springer T.A."/>
            <person name="Umayam L.A."/>
            <person name="White O."/>
            <person name="White R.H."/>
            <person name="de Macario E.C."/>
            <person name="Ferry J.G."/>
            <person name="Jarrell K.F."/>
            <person name="Jing H."/>
            <person name="Macario A.J.L."/>
            <person name="Paulsen I.T."/>
            <person name="Pritchett M."/>
            <person name="Sowers K.R."/>
            <person name="Swanson R.V."/>
            <person name="Zinder S.H."/>
            <person name="Lander E."/>
            <person name="Metcalf W.W."/>
            <person name="Birren B."/>
        </authorList>
    </citation>
    <scope>NUCLEOTIDE SEQUENCE [LARGE SCALE GENOMIC DNA]</scope>
    <source>
        <strain>ATCC 35395 / DSM 2834 / JCM 12185 / C2A</strain>
    </source>
</reference>
<protein>
    <recommendedName>
        <fullName evidence="1">Large ribosomal subunit protein uL16</fullName>
    </recommendedName>
    <alternativeName>
        <fullName evidence="2">50S ribosomal protein L10e</fullName>
    </alternativeName>
</protein>
<keyword id="KW-1185">Reference proteome</keyword>
<keyword id="KW-0687">Ribonucleoprotein</keyword>
<keyword id="KW-0689">Ribosomal protein</keyword>
<sequence length="173" mass="19374">MVRKPGSMYRNVRQRSFTRRKYMGGVPGSQVIHYDMGDKANTSFPVKISLIVEEKCQIRHTALEAARITANRHLVADTGKMGFYMKLRVYPHEVIRENKQATGAGADRVSSGMRRAFGKNVGTAARVKPMQKIFTVAVEKQNFKAAKEALWHAGQKLPTPCRIVVDEGAELVQ</sequence>
<evidence type="ECO:0000255" key="1">
    <source>
        <dbReference type="HAMAP-Rule" id="MF_00448"/>
    </source>
</evidence>
<evidence type="ECO:0000305" key="2"/>
<organism>
    <name type="scientific">Methanosarcina acetivorans (strain ATCC 35395 / DSM 2834 / JCM 12185 / C2A)</name>
    <dbReference type="NCBI Taxonomy" id="188937"/>
    <lineage>
        <taxon>Archaea</taxon>
        <taxon>Methanobacteriati</taxon>
        <taxon>Methanobacteriota</taxon>
        <taxon>Stenosarchaea group</taxon>
        <taxon>Methanomicrobia</taxon>
        <taxon>Methanosarcinales</taxon>
        <taxon>Methanosarcinaceae</taxon>
        <taxon>Methanosarcina</taxon>
    </lineage>
</organism>
<feature type="chain" id="PRO_0000147134" description="Large ribosomal subunit protein uL16">
    <location>
        <begin position="1"/>
        <end position="173"/>
    </location>
</feature>
<dbReference type="EMBL" id="AE010299">
    <property type="protein sequence ID" value="AAM03636.1"/>
    <property type="molecule type" value="Genomic_DNA"/>
</dbReference>
<dbReference type="RefSeq" id="WP_011020241.1">
    <property type="nucleotide sequence ID" value="NC_003552.1"/>
</dbReference>
<dbReference type="SMR" id="Q8TU90"/>
<dbReference type="FunCoup" id="Q8TU90">
    <property type="interactions" value="137"/>
</dbReference>
<dbReference type="STRING" id="188937.MA_0183"/>
<dbReference type="EnsemblBacteria" id="AAM03636">
    <property type="protein sequence ID" value="AAM03636"/>
    <property type="gene ID" value="MA_0183"/>
</dbReference>
<dbReference type="GeneID" id="1472075"/>
<dbReference type="KEGG" id="mac:MA_0183"/>
<dbReference type="HOGENOM" id="CLU_084051_0_2_2"/>
<dbReference type="InParanoid" id="Q8TU90"/>
<dbReference type="OrthoDB" id="30538at2157"/>
<dbReference type="PhylomeDB" id="Q8TU90"/>
<dbReference type="Proteomes" id="UP000002487">
    <property type="component" value="Chromosome"/>
</dbReference>
<dbReference type="GO" id="GO:0022625">
    <property type="term" value="C:cytosolic large ribosomal subunit"/>
    <property type="evidence" value="ECO:0000318"/>
    <property type="project" value="GO_Central"/>
</dbReference>
<dbReference type="GO" id="GO:0003735">
    <property type="term" value="F:structural constituent of ribosome"/>
    <property type="evidence" value="ECO:0000318"/>
    <property type="project" value="GO_Central"/>
</dbReference>
<dbReference type="GO" id="GO:0006412">
    <property type="term" value="P:translation"/>
    <property type="evidence" value="ECO:0000318"/>
    <property type="project" value="GO_Central"/>
</dbReference>
<dbReference type="CDD" id="cd01433">
    <property type="entry name" value="Ribosomal_L16_L10e"/>
    <property type="match status" value="1"/>
</dbReference>
<dbReference type="FunFam" id="3.90.1170.10:FF:000008">
    <property type="entry name" value="50S ribosomal protein L10e"/>
    <property type="match status" value="1"/>
</dbReference>
<dbReference type="Gene3D" id="3.90.1170.10">
    <property type="entry name" value="Ribosomal protein L10e/L16"/>
    <property type="match status" value="1"/>
</dbReference>
<dbReference type="HAMAP" id="MF_00448">
    <property type="entry name" value="Ribosomal_uL16_arch"/>
    <property type="match status" value="1"/>
</dbReference>
<dbReference type="InterPro" id="IPR047873">
    <property type="entry name" value="Ribosomal_uL16"/>
</dbReference>
<dbReference type="InterPro" id="IPR022981">
    <property type="entry name" value="Ribosomal_uL16_arc"/>
</dbReference>
<dbReference type="InterPro" id="IPR018255">
    <property type="entry name" value="Ribosomal_uL16_CS_euk_arc"/>
</dbReference>
<dbReference type="InterPro" id="IPR016180">
    <property type="entry name" value="Ribosomal_uL16_dom"/>
</dbReference>
<dbReference type="InterPro" id="IPR001197">
    <property type="entry name" value="Ribosomal_uL16_euk_arch"/>
</dbReference>
<dbReference type="InterPro" id="IPR036920">
    <property type="entry name" value="Ribosomal_uL16_sf"/>
</dbReference>
<dbReference type="NCBIfam" id="NF003238">
    <property type="entry name" value="PRK04199.1-3"/>
    <property type="match status" value="1"/>
</dbReference>
<dbReference type="NCBIfam" id="NF003239">
    <property type="entry name" value="PRK04199.1-4"/>
    <property type="match status" value="1"/>
</dbReference>
<dbReference type="NCBIfam" id="TIGR00279">
    <property type="entry name" value="uL16_euk_arch"/>
    <property type="match status" value="1"/>
</dbReference>
<dbReference type="PANTHER" id="PTHR11726">
    <property type="entry name" value="60S RIBOSOMAL PROTEIN L10"/>
    <property type="match status" value="1"/>
</dbReference>
<dbReference type="Pfam" id="PF00252">
    <property type="entry name" value="Ribosomal_L16"/>
    <property type="match status" value="1"/>
</dbReference>
<dbReference type="PIRSF" id="PIRSF005590">
    <property type="entry name" value="Ribosomal_L10"/>
    <property type="match status" value="1"/>
</dbReference>
<dbReference type="SUPFAM" id="SSF54686">
    <property type="entry name" value="Ribosomal protein L16p/L10e"/>
    <property type="match status" value="1"/>
</dbReference>
<dbReference type="PROSITE" id="PS01257">
    <property type="entry name" value="RIBOSOMAL_L10E"/>
    <property type="match status" value="1"/>
</dbReference>
<accession>Q8TU90</accession>